<evidence type="ECO:0000255" key="1">
    <source>
        <dbReference type="HAMAP-Rule" id="MF_00439"/>
    </source>
</evidence>
<accession>Q7VE59</accession>
<proteinExistence type="inferred from homology"/>
<sequence length="173" mass="19800">MPSSNNKDNFLDKAFTVIAEGIVKMMPIAAKEKQAYIYYREGFAAQNNGDYSEALENYEESLKLEENAIDRGETLKNMAIIYMSNGDEDKALDTYQKALEQNPKQPSCLKNMGLIYEKRGRALQQNGKQDESDIWFDKAAEVWTKAVRLYPGGYLDIENWLKTTGRSKVDIYL</sequence>
<protein>
    <recommendedName>
        <fullName evidence="1">Photosystem I assembly protein Ycf3</fullName>
    </recommendedName>
</protein>
<organism>
    <name type="scientific">Prochlorococcus marinus (strain SARG / CCMP1375 / SS120)</name>
    <dbReference type="NCBI Taxonomy" id="167539"/>
    <lineage>
        <taxon>Bacteria</taxon>
        <taxon>Bacillati</taxon>
        <taxon>Cyanobacteriota</taxon>
        <taxon>Cyanophyceae</taxon>
        <taxon>Synechococcales</taxon>
        <taxon>Prochlorococcaceae</taxon>
        <taxon>Prochlorococcus</taxon>
    </lineage>
</organism>
<dbReference type="EMBL" id="AE017126">
    <property type="protein sequence ID" value="AAP99200.1"/>
    <property type="molecule type" value="Genomic_DNA"/>
</dbReference>
<dbReference type="RefSeq" id="NP_874548.1">
    <property type="nucleotide sequence ID" value="NC_005042.1"/>
</dbReference>
<dbReference type="RefSeq" id="WP_011124309.1">
    <property type="nucleotide sequence ID" value="NC_005042.1"/>
</dbReference>
<dbReference type="SMR" id="Q7VE59"/>
<dbReference type="STRING" id="167539.Pro_0154"/>
<dbReference type="EnsemblBacteria" id="AAP99200">
    <property type="protein sequence ID" value="AAP99200"/>
    <property type="gene ID" value="Pro_0154"/>
</dbReference>
<dbReference type="KEGG" id="pma:Pro_0154"/>
<dbReference type="PATRIC" id="fig|167539.5.peg.160"/>
<dbReference type="eggNOG" id="COG3063">
    <property type="taxonomic scope" value="Bacteria"/>
</dbReference>
<dbReference type="HOGENOM" id="CLU_141248_0_0_3"/>
<dbReference type="OrthoDB" id="9429505at2"/>
<dbReference type="Proteomes" id="UP000001420">
    <property type="component" value="Chromosome"/>
</dbReference>
<dbReference type="GO" id="GO:0031676">
    <property type="term" value="C:plasma membrane-derived thylakoid membrane"/>
    <property type="evidence" value="ECO:0007669"/>
    <property type="project" value="UniProtKB-SubCell"/>
</dbReference>
<dbReference type="GO" id="GO:0015979">
    <property type="term" value="P:photosynthesis"/>
    <property type="evidence" value="ECO:0007669"/>
    <property type="project" value="UniProtKB-UniRule"/>
</dbReference>
<dbReference type="Gene3D" id="1.25.40.10">
    <property type="entry name" value="Tetratricopeptide repeat domain"/>
    <property type="match status" value="1"/>
</dbReference>
<dbReference type="HAMAP" id="MF_00439">
    <property type="entry name" value="Ycf3"/>
    <property type="match status" value="1"/>
</dbReference>
<dbReference type="InterPro" id="IPR022818">
    <property type="entry name" value="PSI_Ycf3_assembly"/>
</dbReference>
<dbReference type="InterPro" id="IPR011990">
    <property type="entry name" value="TPR-like_helical_dom_sf"/>
</dbReference>
<dbReference type="InterPro" id="IPR019734">
    <property type="entry name" value="TPR_rpt"/>
</dbReference>
<dbReference type="InterPro" id="IPR051685">
    <property type="entry name" value="Ycf3/AcsC/BcsC/TPR_MFPF"/>
</dbReference>
<dbReference type="NCBIfam" id="NF002725">
    <property type="entry name" value="PRK02603.1"/>
    <property type="match status" value="1"/>
</dbReference>
<dbReference type="PANTHER" id="PTHR44943">
    <property type="entry name" value="CELLULOSE SYNTHASE OPERON PROTEIN C"/>
    <property type="match status" value="1"/>
</dbReference>
<dbReference type="PANTHER" id="PTHR44943:SF8">
    <property type="entry name" value="TPR REPEAT-CONTAINING PROTEIN MJ0263"/>
    <property type="match status" value="1"/>
</dbReference>
<dbReference type="Pfam" id="PF13424">
    <property type="entry name" value="TPR_12"/>
    <property type="match status" value="1"/>
</dbReference>
<dbReference type="SMART" id="SM00028">
    <property type="entry name" value="TPR"/>
    <property type="match status" value="3"/>
</dbReference>
<dbReference type="SUPFAM" id="SSF48452">
    <property type="entry name" value="TPR-like"/>
    <property type="match status" value="1"/>
</dbReference>
<dbReference type="PROSITE" id="PS50005">
    <property type="entry name" value="TPR"/>
    <property type="match status" value="2"/>
</dbReference>
<dbReference type="PROSITE" id="PS50293">
    <property type="entry name" value="TPR_REGION"/>
    <property type="match status" value="1"/>
</dbReference>
<gene>
    <name evidence="1" type="primary">ycf3</name>
    <name type="ordered locus">Pro_0154</name>
</gene>
<comment type="function">
    <text evidence="1">Essential for the assembly of the photosystem I (PSI) complex. May act as a chaperone-like factor to guide the assembly of the PSI subunits.</text>
</comment>
<comment type="subcellular location">
    <subcellularLocation>
        <location evidence="1">Cellular thylakoid membrane</location>
        <topology evidence="1">Peripheral membrane protein</topology>
    </subcellularLocation>
</comment>
<comment type="similarity">
    <text evidence="1">Belongs to the Ycf3 family.</text>
</comment>
<feature type="chain" id="PRO_0000217829" description="Photosystem I assembly protein Ycf3">
    <location>
        <begin position="1"/>
        <end position="173"/>
    </location>
</feature>
<feature type="repeat" description="TPR 1">
    <location>
        <begin position="35"/>
        <end position="68"/>
    </location>
</feature>
<feature type="repeat" description="TPR 2">
    <location>
        <begin position="72"/>
        <end position="105"/>
    </location>
</feature>
<feature type="repeat" description="TPR 3">
    <location>
        <begin position="120"/>
        <end position="153"/>
    </location>
</feature>
<reference key="1">
    <citation type="journal article" date="2003" name="Proc. Natl. Acad. Sci. U.S.A.">
        <title>Genome sequence of the cyanobacterium Prochlorococcus marinus SS120, a nearly minimal oxyphototrophic genome.</title>
        <authorList>
            <person name="Dufresne A."/>
            <person name="Salanoubat M."/>
            <person name="Partensky F."/>
            <person name="Artiguenave F."/>
            <person name="Axmann I.M."/>
            <person name="Barbe V."/>
            <person name="Duprat S."/>
            <person name="Galperin M.Y."/>
            <person name="Koonin E.V."/>
            <person name="Le Gall F."/>
            <person name="Makarova K.S."/>
            <person name="Ostrowski M."/>
            <person name="Oztas S."/>
            <person name="Robert C."/>
            <person name="Rogozin I.B."/>
            <person name="Scanlan D.J."/>
            <person name="Tandeau de Marsac N."/>
            <person name="Weissenbach J."/>
            <person name="Wincker P."/>
            <person name="Wolf Y.I."/>
            <person name="Hess W.R."/>
        </authorList>
    </citation>
    <scope>NUCLEOTIDE SEQUENCE [LARGE SCALE GENOMIC DNA]</scope>
    <source>
        <strain>SARG / CCMP1375 / SS120</strain>
    </source>
</reference>
<keyword id="KW-0472">Membrane</keyword>
<keyword id="KW-0602">Photosynthesis</keyword>
<keyword id="KW-1185">Reference proteome</keyword>
<keyword id="KW-0677">Repeat</keyword>
<keyword id="KW-0793">Thylakoid</keyword>
<keyword id="KW-0802">TPR repeat</keyword>
<name>YCF3_PROMA</name>